<evidence type="ECO:0000255" key="1">
    <source>
        <dbReference type="PROSITE-ProRule" id="PRU00704"/>
    </source>
</evidence>
<evidence type="ECO:0000305" key="2"/>
<comment type="similarity">
    <text evidence="2">Belongs to the transcriptional antiterminator BglG family. GlcT subfamily.</text>
</comment>
<sequence>MGEYIVTKTLNNNVVVCTNNDQEVILIGKGIGFNKKEGMALNDQTITIEKIYKLESEQQKAHYKSLVEIADDNVLQVIIDSLNFISNTAMNVDSKQLVVSLTDHIIFAYKRLKQNQVISNPFVMETMQLYSDAYHIAKQVIDQLNAALDVHFPEDEIGFIALHIASNTEDLSMHEMTLINNVIKKGIDIIESDLVTTVDKESLQYQRFIRHVQFLIRRLRRKEYIHAQDDFVSMIKNHYPICYNTAYKILTMIQKQFDVNISESEIIYLTLHIHHFEERINQS</sequence>
<feature type="chain" id="PRO_0000352609" description="Protein GlcT">
    <location>
        <begin position="1"/>
        <end position="283"/>
    </location>
</feature>
<feature type="domain" description="PRD 1" evidence="1">
    <location>
        <begin position="69"/>
        <end position="173"/>
    </location>
</feature>
<feature type="domain" description="PRD 2" evidence="1">
    <location>
        <begin position="174"/>
        <end position="283"/>
    </location>
</feature>
<organism>
    <name type="scientific">Staphylococcus aureus (strain N315)</name>
    <dbReference type="NCBI Taxonomy" id="158879"/>
    <lineage>
        <taxon>Bacteria</taxon>
        <taxon>Bacillati</taxon>
        <taxon>Bacillota</taxon>
        <taxon>Bacilli</taxon>
        <taxon>Bacillales</taxon>
        <taxon>Staphylococcaceae</taxon>
        <taxon>Staphylococcus</taxon>
    </lineage>
</organism>
<gene>
    <name type="primary">glcT</name>
    <name type="ordered locus">SA1191</name>
</gene>
<reference key="1">
    <citation type="journal article" date="2001" name="Lancet">
        <title>Whole genome sequencing of meticillin-resistant Staphylococcus aureus.</title>
        <authorList>
            <person name="Kuroda M."/>
            <person name="Ohta T."/>
            <person name="Uchiyama I."/>
            <person name="Baba T."/>
            <person name="Yuzawa H."/>
            <person name="Kobayashi I."/>
            <person name="Cui L."/>
            <person name="Oguchi A."/>
            <person name="Aoki K."/>
            <person name="Nagai Y."/>
            <person name="Lian J.-Q."/>
            <person name="Ito T."/>
            <person name="Kanamori M."/>
            <person name="Matsumaru H."/>
            <person name="Maruyama A."/>
            <person name="Murakami H."/>
            <person name="Hosoyama A."/>
            <person name="Mizutani-Ui Y."/>
            <person name="Takahashi N.K."/>
            <person name="Sawano T."/>
            <person name="Inoue R."/>
            <person name="Kaito C."/>
            <person name="Sekimizu K."/>
            <person name="Hirakawa H."/>
            <person name="Kuhara S."/>
            <person name="Goto S."/>
            <person name="Yabuzaki J."/>
            <person name="Kanehisa M."/>
            <person name="Yamashita A."/>
            <person name="Oshima K."/>
            <person name="Furuya K."/>
            <person name="Yoshino C."/>
            <person name="Shiba T."/>
            <person name="Hattori M."/>
            <person name="Ogasawara N."/>
            <person name="Hayashi H."/>
            <person name="Hiramatsu K."/>
        </authorList>
    </citation>
    <scope>NUCLEOTIDE SEQUENCE [LARGE SCALE GENOMIC DNA]</scope>
    <source>
        <strain>N315</strain>
    </source>
</reference>
<dbReference type="EMBL" id="BA000018">
    <property type="protein sequence ID" value="BAB42449.1"/>
    <property type="molecule type" value="Genomic_DNA"/>
</dbReference>
<dbReference type="PIR" id="E89911">
    <property type="entry name" value="E89911"/>
</dbReference>
<dbReference type="RefSeq" id="WP_000505015.1">
    <property type="nucleotide sequence ID" value="NC_002745.2"/>
</dbReference>
<dbReference type="SMR" id="Q7A5S2"/>
<dbReference type="EnsemblBacteria" id="BAB42449">
    <property type="protein sequence ID" value="BAB42449"/>
    <property type="gene ID" value="BAB42449"/>
</dbReference>
<dbReference type="KEGG" id="sau:SA1191"/>
<dbReference type="HOGENOM" id="CLU_078802_0_0_9"/>
<dbReference type="GO" id="GO:0003723">
    <property type="term" value="F:RNA binding"/>
    <property type="evidence" value="ECO:0007669"/>
    <property type="project" value="InterPro"/>
</dbReference>
<dbReference type="GO" id="GO:0045893">
    <property type="term" value="P:positive regulation of DNA-templated transcription"/>
    <property type="evidence" value="ECO:0007669"/>
    <property type="project" value="InterPro"/>
</dbReference>
<dbReference type="Gene3D" id="1.20.58.1950">
    <property type="match status" value="1"/>
</dbReference>
<dbReference type="Gene3D" id="1.20.890.100">
    <property type="match status" value="1"/>
</dbReference>
<dbReference type="Gene3D" id="2.30.24.10">
    <property type="entry name" value="CAT RNA-binding domain"/>
    <property type="match status" value="1"/>
</dbReference>
<dbReference type="Gene3D" id="1.10.1790.10">
    <property type="entry name" value="PRD domain"/>
    <property type="match status" value="1"/>
</dbReference>
<dbReference type="InterPro" id="IPR050661">
    <property type="entry name" value="BglG_antiterminators"/>
</dbReference>
<dbReference type="InterPro" id="IPR004341">
    <property type="entry name" value="CAT_RNA-bd_dom"/>
</dbReference>
<dbReference type="InterPro" id="IPR036650">
    <property type="entry name" value="CAT_RNA-bd_dom_sf"/>
</dbReference>
<dbReference type="InterPro" id="IPR011608">
    <property type="entry name" value="PRD"/>
</dbReference>
<dbReference type="InterPro" id="IPR036634">
    <property type="entry name" value="PRD_sf"/>
</dbReference>
<dbReference type="InterPro" id="IPR001550">
    <property type="entry name" value="Transcrpt_antitermin_CS"/>
</dbReference>
<dbReference type="NCBIfam" id="NF047357">
    <property type="entry name" value="antiterm_GlcT"/>
    <property type="match status" value="1"/>
</dbReference>
<dbReference type="PANTHER" id="PTHR30185">
    <property type="entry name" value="CRYPTIC BETA-GLUCOSIDE BGL OPERON ANTITERMINATOR"/>
    <property type="match status" value="1"/>
</dbReference>
<dbReference type="PANTHER" id="PTHR30185:SF16">
    <property type="entry name" value="PROTEIN GLCT"/>
    <property type="match status" value="1"/>
</dbReference>
<dbReference type="Pfam" id="PF03123">
    <property type="entry name" value="CAT_RBD"/>
    <property type="match status" value="1"/>
</dbReference>
<dbReference type="Pfam" id="PF00874">
    <property type="entry name" value="PRD"/>
    <property type="match status" value="2"/>
</dbReference>
<dbReference type="SMART" id="SM01061">
    <property type="entry name" value="CAT_RBD"/>
    <property type="match status" value="1"/>
</dbReference>
<dbReference type="SUPFAM" id="SSF63520">
    <property type="entry name" value="PTS-regulatory domain, PRD"/>
    <property type="match status" value="2"/>
</dbReference>
<dbReference type="SUPFAM" id="SSF50151">
    <property type="entry name" value="SacY-like RNA-binding domain"/>
    <property type="match status" value="1"/>
</dbReference>
<dbReference type="PROSITE" id="PS00654">
    <property type="entry name" value="PRD_1"/>
    <property type="match status" value="1"/>
</dbReference>
<dbReference type="PROSITE" id="PS51372">
    <property type="entry name" value="PRD_2"/>
    <property type="match status" value="2"/>
</dbReference>
<accession>Q7A5S2</accession>
<name>GLCT_STAAN</name>
<proteinExistence type="inferred from homology"/>
<protein>
    <recommendedName>
        <fullName>Protein GlcT</fullName>
    </recommendedName>
</protein>
<keyword id="KW-0677">Repeat</keyword>